<dbReference type="EMBL" id="CP000477">
    <property type="protein sequence ID" value="ABK14036.1"/>
    <property type="molecule type" value="Genomic_DNA"/>
</dbReference>
<dbReference type="RefSeq" id="WP_011695435.1">
    <property type="nucleotide sequence ID" value="NC_008553.1"/>
</dbReference>
<dbReference type="PDB" id="3ZID">
    <property type="method" value="X-ray"/>
    <property type="resolution" value="2.00 A"/>
    <property type="chains" value="A/B=1-367"/>
</dbReference>
<dbReference type="PDBsum" id="3ZID"/>
<dbReference type="SMR" id="A0B5R2"/>
<dbReference type="STRING" id="349307.Mthe_0239"/>
<dbReference type="GeneID" id="4462062"/>
<dbReference type="KEGG" id="mtp:Mthe_0239"/>
<dbReference type="HOGENOM" id="CLU_745168_0_0_2"/>
<dbReference type="OrthoDB" id="329751at2157"/>
<dbReference type="EvolutionaryTrace" id="A0B5R2"/>
<dbReference type="Proteomes" id="UP000000674">
    <property type="component" value="Chromosome"/>
</dbReference>
<dbReference type="GO" id="GO:0032153">
    <property type="term" value="C:cell division site"/>
    <property type="evidence" value="ECO:0007669"/>
    <property type="project" value="TreeGrafter"/>
</dbReference>
<dbReference type="GO" id="GO:0005737">
    <property type="term" value="C:cytoplasm"/>
    <property type="evidence" value="ECO:0007669"/>
    <property type="project" value="UniProtKB-SubCell"/>
</dbReference>
<dbReference type="GO" id="GO:0005525">
    <property type="term" value="F:GTP binding"/>
    <property type="evidence" value="ECO:0007669"/>
    <property type="project" value="UniProtKB-UniRule"/>
</dbReference>
<dbReference type="GO" id="GO:0003924">
    <property type="term" value="F:GTPase activity"/>
    <property type="evidence" value="ECO:0007669"/>
    <property type="project" value="InterPro"/>
</dbReference>
<dbReference type="GO" id="GO:0051301">
    <property type="term" value="P:cell division"/>
    <property type="evidence" value="ECO:0007669"/>
    <property type="project" value="TreeGrafter"/>
</dbReference>
<dbReference type="GO" id="GO:0008360">
    <property type="term" value="P:regulation of cell shape"/>
    <property type="evidence" value="ECO:0007669"/>
    <property type="project" value="UniProtKB-UniRule"/>
</dbReference>
<dbReference type="CDD" id="cd02191">
    <property type="entry name" value="FtsZ_CetZ-like"/>
    <property type="match status" value="1"/>
</dbReference>
<dbReference type="Gene3D" id="3.40.50.1440">
    <property type="entry name" value="Tubulin/FtsZ, GTPase domain"/>
    <property type="match status" value="1"/>
</dbReference>
<dbReference type="HAMAP" id="MF_01946">
    <property type="entry name" value="CetZ"/>
    <property type="match status" value="1"/>
</dbReference>
<dbReference type="InterPro" id="IPR032907">
    <property type="entry name" value="CetZ"/>
</dbReference>
<dbReference type="InterPro" id="IPR045061">
    <property type="entry name" value="FtsZ/CetZ"/>
</dbReference>
<dbReference type="InterPro" id="IPR036525">
    <property type="entry name" value="Tubulin/FtsZ_GTPase_sf"/>
</dbReference>
<dbReference type="InterPro" id="IPR003008">
    <property type="entry name" value="Tubulin_FtsZ_GTPase"/>
</dbReference>
<dbReference type="PANTHER" id="PTHR30314">
    <property type="entry name" value="CELL DIVISION PROTEIN FTSZ-RELATED"/>
    <property type="match status" value="1"/>
</dbReference>
<dbReference type="PANTHER" id="PTHR30314:SF10">
    <property type="entry name" value="TUBULIN-LIKE PROTEIN CETZ"/>
    <property type="match status" value="1"/>
</dbReference>
<dbReference type="Pfam" id="PF00091">
    <property type="entry name" value="Tubulin"/>
    <property type="match status" value="1"/>
</dbReference>
<dbReference type="SMART" id="SM00864">
    <property type="entry name" value="Tubulin"/>
    <property type="match status" value="1"/>
</dbReference>
<dbReference type="SUPFAM" id="SSF52490">
    <property type="entry name" value="Tubulin nucleotide-binding domain-like"/>
    <property type="match status" value="1"/>
</dbReference>
<name>CETZ_METTP</name>
<protein>
    <recommendedName>
        <fullName evidence="1 4">Tubulin-like protein CetZ</fullName>
    </recommendedName>
    <alternativeName>
        <fullName evidence="3">Cell-structure-related euryarchaeota tubulin/FtsZ homolog</fullName>
    </alternativeName>
</protein>
<accession>A0B5R2</accession>
<keyword id="KW-0002">3D-structure</keyword>
<keyword id="KW-0133">Cell shape</keyword>
<keyword id="KW-0963">Cytoplasm</keyword>
<keyword id="KW-0342">GTP-binding</keyword>
<keyword id="KW-0547">Nucleotide-binding</keyword>
<keyword id="KW-1185">Reference proteome</keyword>
<reference key="1">
    <citation type="submission" date="2006-10" db="EMBL/GenBank/DDBJ databases">
        <title>Complete sequence of Methanosaeta thermophila PT.</title>
        <authorList>
            <consortium name="US DOE Joint Genome Institute"/>
            <person name="Copeland A."/>
            <person name="Lucas S."/>
            <person name="Lapidus A."/>
            <person name="Barry K."/>
            <person name="Detter J.C."/>
            <person name="Glavina del Rio T."/>
            <person name="Hammon N."/>
            <person name="Israni S."/>
            <person name="Pitluck S."/>
            <person name="Chain P."/>
            <person name="Malfatti S."/>
            <person name="Shin M."/>
            <person name="Vergez L."/>
            <person name="Schmutz J."/>
            <person name="Larimer F."/>
            <person name="Land M."/>
            <person name="Hauser L."/>
            <person name="Kyrpides N."/>
            <person name="Kim E."/>
            <person name="Smith K.S."/>
            <person name="Ingram-Smith C."/>
            <person name="Richardson P."/>
        </authorList>
    </citation>
    <scope>NUCLEOTIDE SEQUENCE [LARGE SCALE GENOMIC DNA]</scope>
    <source>
        <strain>DSM 6194 / JCM 14653 / NBRC 101360 / PT</strain>
    </source>
</reference>
<reference key="2">
    <citation type="journal article" date="2015" name="Nature">
        <title>CetZ tubulin-like proteins control archaeal cell shape.</title>
        <authorList>
            <person name="Duggin I.G."/>
            <person name="Aylett C.H."/>
            <person name="Walsh J.C."/>
            <person name="Michie K.A."/>
            <person name="Wang Q."/>
            <person name="Turnbull L."/>
            <person name="Dawson E.M."/>
            <person name="Harry E.J."/>
            <person name="Whitchurch C.B."/>
            <person name="Amos L.A."/>
            <person name="Loewe J."/>
        </authorList>
    </citation>
    <scope>X-RAY CRYSTALLOGRAPHY (2.00 ANGSTROMS) IN COMPLEX WITH GDP</scope>
</reference>
<feature type="chain" id="PRO_0000432189" description="Tubulin-like protein CetZ">
    <location>
        <begin position="1"/>
        <end position="367"/>
    </location>
</feature>
<feature type="binding site" evidence="1 2">
    <location>
        <begin position="11"/>
        <end position="15"/>
    </location>
    <ligand>
        <name>GTP</name>
        <dbReference type="ChEBI" id="CHEBI:37565"/>
    </ligand>
</feature>
<feature type="binding site" evidence="2">
    <location>
        <position position="111"/>
    </location>
    <ligand>
        <name>GTP</name>
        <dbReference type="ChEBI" id="CHEBI:37565"/>
    </ligand>
</feature>
<feature type="binding site" evidence="1 2">
    <location>
        <begin position="115"/>
        <end position="117"/>
    </location>
    <ligand>
        <name>GTP</name>
        <dbReference type="ChEBI" id="CHEBI:37565"/>
    </ligand>
</feature>
<feature type="binding site" evidence="1 2">
    <location>
        <position position="148"/>
    </location>
    <ligand>
        <name>GTP</name>
        <dbReference type="ChEBI" id="CHEBI:37565"/>
    </ligand>
</feature>
<feature type="binding site" evidence="1 2">
    <location>
        <position position="176"/>
    </location>
    <ligand>
        <name>GTP</name>
        <dbReference type="ChEBI" id="CHEBI:37565"/>
    </ligand>
</feature>
<feature type="binding site" evidence="1 2">
    <location>
        <position position="194"/>
    </location>
    <ligand>
        <name>GTP</name>
        <dbReference type="ChEBI" id="CHEBI:37565"/>
    </ligand>
</feature>
<feature type="strand" evidence="6">
    <location>
        <begin position="3"/>
        <end position="9"/>
    </location>
</feature>
<feature type="helix" evidence="6">
    <location>
        <begin position="10"/>
        <end position="30"/>
    </location>
</feature>
<feature type="strand" evidence="6">
    <location>
        <begin position="42"/>
        <end position="50"/>
    </location>
</feature>
<feature type="helix" evidence="6">
    <location>
        <begin position="52"/>
        <end position="56"/>
    </location>
</feature>
<feature type="strand" evidence="6">
    <location>
        <begin position="59"/>
        <end position="61"/>
    </location>
</feature>
<feature type="helix" evidence="6">
    <location>
        <begin position="63"/>
        <end position="65"/>
    </location>
</feature>
<feature type="strand" evidence="6">
    <location>
        <begin position="66"/>
        <end position="68"/>
    </location>
</feature>
<feature type="helix" evidence="6">
    <location>
        <begin position="79"/>
        <end position="98"/>
    </location>
</feature>
<feature type="strand" evidence="6">
    <location>
        <begin position="104"/>
        <end position="116"/>
    </location>
</feature>
<feature type="helix" evidence="6">
    <location>
        <begin position="117"/>
        <end position="131"/>
    </location>
</feature>
<feature type="strand" evidence="6">
    <location>
        <begin position="136"/>
        <end position="143"/>
    </location>
</feature>
<feature type="helix" evidence="6">
    <location>
        <begin position="150"/>
        <end position="165"/>
    </location>
</feature>
<feature type="strand" evidence="6">
    <location>
        <begin position="172"/>
        <end position="175"/>
    </location>
</feature>
<feature type="helix" evidence="6">
    <location>
        <begin position="176"/>
        <end position="179"/>
    </location>
</feature>
<feature type="helix" evidence="6">
    <location>
        <begin position="186"/>
        <end position="210"/>
    </location>
</feature>
<feature type="helix" evidence="6">
    <location>
        <begin position="215"/>
        <end position="218"/>
    </location>
</feature>
<feature type="helix" evidence="6">
    <location>
        <begin position="219"/>
        <end position="225"/>
    </location>
</feature>
<feature type="strand" evidence="6">
    <location>
        <begin position="232"/>
        <end position="238"/>
    </location>
</feature>
<feature type="helix" evidence="6">
    <location>
        <begin position="246"/>
        <end position="252"/>
    </location>
</feature>
<feature type="helix" evidence="6">
    <location>
        <begin position="256"/>
        <end position="258"/>
    </location>
</feature>
<feature type="strand" evidence="6">
    <location>
        <begin position="259"/>
        <end position="261"/>
    </location>
</feature>
<feature type="helix" evidence="6">
    <location>
        <begin position="265"/>
        <end position="267"/>
    </location>
</feature>
<feature type="strand" evidence="6">
    <location>
        <begin position="270"/>
        <end position="279"/>
    </location>
</feature>
<feature type="helix" evidence="6">
    <location>
        <begin position="281"/>
        <end position="283"/>
    </location>
</feature>
<feature type="helix" evidence="6">
    <location>
        <begin position="286"/>
        <end position="296"/>
    </location>
</feature>
<feature type="turn" evidence="6">
    <location>
        <begin position="297"/>
        <end position="299"/>
    </location>
</feature>
<feature type="strand" evidence="6">
    <location>
        <begin position="301"/>
        <end position="309"/>
    </location>
</feature>
<feature type="strand" evidence="6">
    <location>
        <begin position="311"/>
        <end position="313"/>
    </location>
</feature>
<feature type="strand" evidence="6">
    <location>
        <begin position="315"/>
        <end position="323"/>
    </location>
</feature>
<feature type="helix" evidence="6">
    <location>
        <begin position="326"/>
        <end position="367"/>
    </location>
</feature>
<evidence type="ECO:0000255" key="1">
    <source>
        <dbReference type="HAMAP-Rule" id="MF_01946"/>
    </source>
</evidence>
<evidence type="ECO:0000269" key="2">
    <source>
    </source>
</evidence>
<evidence type="ECO:0000303" key="3">
    <source>
    </source>
</evidence>
<evidence type="ECO:0000305" key="4"/>
<evidence type="ECO:0000312" key="5">
    <source>
        <dbReference type="EMBL" id="ABK14036.1"/>
    </source>
</evidence>
<evidence type="ECO:0007829" key="6">
    <source>
        <dbReference type="PDB" id="3ZID"/>
    </source>
</evidence>
<proteinExistence type="evidence at protein level"/>
<comment type="function">
    <text evidence="1">Involved in cell shape control.</text>
</comment>
<comment type="subcellular location">
    <subcellularLocation>
        <location evidence="1">Cytoplasm</location>
    </subcellularLocation>
</comment>
<comment type="similarity">
    <text evidence="1 4">Belongs to the CetZ family.</text>
</comment>
<sequence>MLNVLMLGVGQCGNRILDAVNRQAFGGSRLAKYYSKQRFPSRVETIAINTAINDLKELKFTAAKDRLHVPNLHGVGANRSKGKQGFWENQEMILEEIEKRGDFDLIFVMTSVSGGTGSSFSPLMIHELKKRYKNATIVPIAVLPFREEGTIYLQNAAFCLREMIEVEADGMILVDNQYLKRFSGDIASAYDRINTMVAQRLLFLIEALDSEMLSVTDLGDFKTVMNGGLRMGTLGYYQADKKSPSIRAAIKNSLREVGLLYPANVDAGEAGRAMIVIQGSREYLNVDEITKEIESLTETIGHVFKGIVIKKGEPRVLSVLSLERAPGLVELYEKAKWAIQEERERKDRARSELYEAFEQINDLEEIY</sequence>
<organism>
    <name type="scientific">Methanothrix thermoacetophila (strain DSM 6194 / JCM 14653 / NBRC 101360 / PT)</name>
    <name type="common">Methanosaeta thermophila</name>
    <dbReference type="NCBI Taxonomy" id="349307"/>
    <lineage>
        <taxon>Archaea</taxon>
        <taxon>Methanobacteriati</taxon>
        <taxon>Methanobacteriota</taxon>
        <taxon>Stenosarchaea group</taxon>
        <taxon>Methanomicrobia</taxon>
        <taxon>Methanotrichales</taxon>
        <taxon>Methanotrichaceae</taxon>
        <taxon>Methanothrix</taxon>
    </lineage>
</organism>
<gene>
    <name evidence="1 3" type="primary">cetZ</name>
    <name evidence="5" type="ordered locus">Mthe_0239</name>
</gene>